<gene>
    <name evidence="1" type="primary">rplT</name>
    <name type="ordered locus">MMAR_2450</name>
</gene>
<protein>
    <recommendedName>
        <fullName evidence="1">Large ribosomal subunit protein bL20</fullName>
    </recommendedName>
    <alternativeName>
        <fullName evidence="2">50S ribosomal protein L20</fullName>
    </alternativeName>
</protein>
<sequence length="129" mass="14473">MARVKRAVNAHKKRRSVLKASKGYRGQRSRLYRKAKEQQLHSLNYAYRDRRARKGEFRKLWISRINAAARANDITYNRLIQGLKAAGVEVDRKNLADIAITDPAAFTALVDVARAALPEDVNAPSGEAA</sequence>
<comment type="function">
    <text evidence="1">Binds directly to 23S ribosomal RNA and is necessary for the in vitro assembly process of the 50S ribosomal subunit. It is not involved in the protein synthesizing functions of that subunit.</text>
</comment>
<comment type="similarity">
    <text evidence="1">Belongs to the bacterial ribosomal protein bL20 family.</text>
</comment>
<evidence type="ECO:0000255" key="1">
    <source>
        <dbReference type="HAMAP-Rule" id="MF_00382"/>
    </source>
</evidence>
<evidence type="ECO:0000305" key="2"/>
<accession>B2HR14</accession>
<name>RL20_MYCMM</name>
<reference key="1">
    <citation type="journal article" date="2008" name="Genome Res.">
        <title>Insights from the complete genome sequence of Mycobacterium marinum on the evolution of Mycobacterium tuberculosis.</title>
        <authorList>
            <person name="Stinear T.P."/>
            <person name="Seemann T."/>
            <person name="Harrison P.F."/>
            <person name="Jenkin G.A."/>
            <person name="Davies J.K."/>
            <person name="Johnson P.D."/>
            <person name="Abdellah Z."/>
            <person name="Arrowsmith C."/>
            <person name="Chillingworth T."/>
            <person name="Churcher C."/>
            <person name="Clarke K."/>
            <person name="Cronin A."/>
            <person name="Davis P."/>
            <person name="Goodhead I."/>
            <person name="Holroyd N."/>
            <person name="Jagels K."/>
            <person name="Lord A."/>
            <person name="Moule S."/>
            <person name="Mungall K."/>
            <person name="Norbertczak H."/>
            <person name="Quail M.A."/>
            <person name="Rabbinowitsch E."/>
            <person name="Walker D."/>
            <person name="White B."/>
            <person name="Whitehead S."/>
            <person name="Small P.L."/>
            <person name="Brosch R."/>
            <person name="Ramakrishnan L."/>
            <person name="Fischbach M.A."/>
            <person name="Parkhill J."/>
            <person name="Cole S.T."/>
        </authorList>
    </citation>
    <scope>NUCLEOTIDE SEQUENCE [LARGE SCALE GENOMIC DNA]</scope>
    <source>
        <strain>ATCC BAA-535 / M</strain>
    </source>
</reference>
<keyword id="KW-1185">Reference proteome</keyword>
<keyword id="KW-0687">Ribonucleoprotein</keyword>
<keyword id="KW-0689">Ribosomal protein</keyword>
<keyword id="KW-0694">RNA-binding</keyword>
<keyword id="KW-0699">rRNA-binding</keyword>
<organism>
    <name type="scientific">Mycobacterium marinum (strain ATCC BAA-535 / M)</name>
    <dbReference type="NCBI Taxonomy" id="216594"/>
    <lineage>
        <taxon>Bacteria</taxon>
        <taxon>Bacillati</taxon>
        <taxon>Actinomycetota</taxon>
        <taxon>Actinomycetes</taxon>
        <taxon>Mycobacteriales</taxon>
        <taxon>Mycobacteriaceae</taxon>
        <taxon>Mycobacterium</taxon>
        <taxon>Mycobacterium ulcerans group</taxon>
    </lineage>
</organism>
<proteinExistence type="inferred from homology"/>
<dbReference type="EMBL" id="CP000854">
    <property type="protein sequence ID" value="ACC40900.1"/>
    <property type="molecule type" value="Genomic_DNA"/>
</dbReference>
<dbReference type="RefSeq" id="WP_012394192.1">
    <property type="nucleotide sequence ID" value="NC_010612.1"/>
</dbReference>
<dbReference type="SMR" id="B2HR14"/>
<dbReference type="STRING" id="216594.MMAR_2450"/>
<dbReference type="GeneID" id="34344026"/>
<dbReference type="GeneID" id="93494609"/>
<dbReference type="KEGG" id="mmi:MMAR_2450"/>
<dbReference type="eggNOG" id="COG0292">
    <property type="taxonomic scope" value="Bacteria"/>
</dbReference>
<dbReference type="HOGENOM" id="CLU_123265_0_0_11"/>
<dbReference type="OrthoDB" id="9808966at2"/>
<dbReference type="Proteomes" id="UP000001190">
    <property type="component" value="Chromosome"/>
</dbReference>
<dbReference type="GO" id="GO:1990904">
    <property type="term" value="C:ribonucleoprotein complex"/>
    <property type="evidence" value="ECO:0007669"/>
    <property type="project" value="UniProtKB-KW"/>
</dbReference>
<dbReference type="GO" id="GO:0005840">
    <property type="term" value="C:ribosome"/>
    <property type="evidence" value="ECO:0007669"/>
    <property type="project" value="UniProtKB-KW"/>
</dbReference>
<dbReference type="GO" id="GO:0019843">
    <property type="term" value="F:rRNA binding"/>
    <property type="evidence" value="ECO:0007669"/>
    <property type="project" value="UniProtKB-UniRule"/>
</dbReference>
<dbReference type="GO" id="GO:0003735">
    <property type="term" value="F:structural constituent of ribosome"/>
    <property type="evidence" value="ECO:0007669"/>
    <property type="project" value="InterPro"/>
</dbReference>
<dbReference type="GO" id="GO:0000027">
    <property type="term" value="P:ribosomal large subunit assembly"/>
    <property type="evidence" value="ECO:0007669"/>
    <property type="project" value="UniProtKB-UniRule"/>
</dbReference>
<dbReference type="GO" id="GO:0006412">
    <property type="term" value="P:translation"/>
    <property type="evidence" value="ECO:0007669"/>
    <property type="project" value="InterPro"/>
</dbReference>
<dbReference type="CDD" id="cd07026">
    <property type="entry name" value="Ribosomal_L20"/>
    <property type="match status" value="1"/>
</dbReference>
<dbReference type="FunFam" id="1.10.1900.20:FF:000001">
    <property type="entry name" value="50S ribosomal protein L20"/>
    <property type="match status" value="1"/>
</dbReference>
<dbReference type="Gene3D" id="6.10.160.10">
    <property type="match status" value="1"/>
</dbReference>
<dbReference type="Gene3D" id="1.10.1900.20">
    <property type="entry name" value="Ribosomal protein L20"/>
    <property type="match status" value="1"/>
</dbReference>
<dbReference type="HAMAP" id="MF_00382">
    <property type="entry name" value="Ribosomal_bL20"/>
    <property type="match status" value="1"/>
</dbReference>
<dbReference type="InterPro" id="IPR005813">
    <property type="entry name" value="Ribosomal_bL20"/>
</dbReference>
<dbReference type="InterPro" id="IPR049946">
    <property type="entry name" value="RIBOSOMAL_L20_CS"/>
</dbReference>
<dbReference type="InterPro" id="IPR035566">
    <property type="entry name" value="Ribosomal_protein_bL20_C"/>
</dbReference>
<dbReference type="NCBIfam" id="TIGR01032">
    <property type="entry name" value="rplT_bact"/>
    <property type="match status" value="1"/>
</dbReference>
<dbReference type="PANTHER" id="PTHR10986">
    <property type="entry name" value="39S RIBOSOMAL PROTEIN L20"/>
    <property type="match status" value="1"/>
</dbReference>
<dbReference type="Pfam" id="PF00453">
    <property type="entry name" value="Ribosomal_L20"/>
    <property type="match status" value="1"/>
</dbReference>
<dbReference type="PRINTS" id="PR00062">
    <property type="entry name" value="RIBOSOMALL20"/>
</dbReference>
<dbReference type="SUPFAM" id="SSF74731">
    <property type="entry name" value="Ribosomal protein L20"/>
    <property type="match status" value="1"/>
</dbReference>
<dbReference type="PROSITE" id="PS00937">
    <property type="entry name" value="RIBOSOMAL_L20"/>
    <property type="match status" value="1"/>
</dbReference>
<feature type="chain" id="PRO_1000122343" description="Large ribosomal subunit protein bL20">
    <location>
        <begin position="1"/>
        <end position="129"/>
    </location>
</feature>